<dbReference type="EMBL" id="BX284601">
    <property type="protein sequence ID" value="CCD68114.1"/>
    <property type="molecule type" value="Genomic_DNA"/>
</dbReference>
<dbReference type="RefSeq" id="NP_001367697.1">
    <property type="nucleotide sequence ID" value="NM_001380547.1"/>
</dbReference>
<dbReference type="RefSeq" id="NP_491858.1">
    <property type="nucleotide sequence ID" value="NM_059457.5"/>
</dbReference>
<dbReference type="PDB" id="2M3A">
    <property type="method" value="NMR"/>
    <property type="chains" value="A=617-678"/>
</dbReference>
<dbReference type="PDBsum" id="2M3A"/>
<dbReference type="SMR" id="O44548"/>
<dbReference type="FunCoup" id="O44548">
    <property type="interactions" value="335"/>
</dbReference>
<dbReference type="IntAct" id="O44548">
    <property type="interactions" value="6"/>
</dbReference>
<dbReference type="STRING" id="6239.K06A5.4.1"/>
<dbReference type="PaxDb" id="6239-K06A5.4"/>
<dbReference type="PeptideAtlas" id="O44548"/>
<dbReference type="EnsemblMetazoa" id="K06A5.4.1">
    <property type="protein sequence ID" value="K06A5.4.1"/>
    <property type="gene ID" value="WBGene00019432"/>
</dbReference>
<dbReference type="GeneID" id="172350"/>
<dbReference type="UCSC" id="K06A5.4">
    <property type="organism name" value="c. elegans"/>
</dbReference>
<dbReference type="AGR" id="WB:WBGene00019432"/>
<dbReference type="WormBase" id="K06A5.4">
    <property type="protein sequence ID" value="CE26645"/>
    <property type="gene ID" value="WBGene00019432"/>
    <property type="gene designation" value="knl-2"/>
</dbReference>
<dbReference type="eggNOG" id="ENOG502TD1S">
    <property type="taxonomic scope" value="Eukaryota"/>
</dbReference>
<dbReference type="GeneTree" id="ENSGT00390000007395"/>
<dbReference type="HOGENOM" id="CLU_361400_0_0_1"/>
<dbReference type="InParanoid" id="O44548"/>
<dbReference type="OMA" id="AITRLKW"/>
<dbReference type="OrthoDB" id="118550at2759"/>
<dbReference type="CD-CODE" id="1E117272">
    <property type="entry name" value="Centrosome"/>
</dbReference>
<dbReference type="PRO" id="PR:O44548"/>
<dbReference type="Proteomes" id="UP000001940">
    <property type="component" value="Chromosome I"/>
</dbReference>
<dbReference type="Bgee" id="WBGene00019432">
    <property type="expression patterns" value="Expressed in germ line (C elegans) and 4 other cell types or tissues"/>
</dbReference>
<dbReference type="GO" id="GO:0000775">
    <property type="term" value="C:chromosome, centromeric region"/>
    <property type="evidence" value="ECO:0000314"/>
    <property type="project" value="UniProtKB"/>
</dbReference>
<dbReference type="GO" id="GO:0000776">
    <property type="term" value="C:kinetochore"/>
    <property type="evidence" value="ECO:0000314"/>
    <property type="project" value="UniProtKB"/>
</dbReference>
<dbReference type="GO" id="GO:0005634">
    <property type="term" value="C:nucleus"/>
    <property type="evidence" value="ECO:0000314"/>
    <property type="project" value="WormBase"/>
</dbReference>
<dbReference type="GO" id="GO:0051301">
    <property type="term" value="P:cell division"/>
    <property type="evidence" value="ECO:0007669"/>
    <property type="project" value="UniProtKB-KW"/>
</dbReference>
<dbReference type="GO" id="GO:0007059">
    <property type="term" value="P:chromosome segregation"/>
    <property type="evidence" value="ECO:0007669"/>
    <property type="project" value="UniProtKB-KW"/>
</dbReference>
<dbReference type="GO" id="GO:0051321">
    <property type="term" value="P:meiotic cell cycle"/>
    <property type="evidence" value="ECO:0007669"/>
    <property type="project" value="UniProtKB-KW"/>
</dbReference>
<dbReference type="Gene3D" id="1.10.10.1900">
    <property type="entry name" value="Knl-2 Myb-like DNA-binding domain-like"/>
    <property type="match status" value="1"/>
</dbReference>
<dbReference type="InterPro" id="IPR048553">
    <property type="entry name" value="Knl-2-like_dom"/>
</dbReference>
<dbReference type="InterPro" id="IPR044895">
    <property type="entry name" value="Knl-2_Myb-like_DNA-bd_sf"/>
</dbReference>
<dbReference type="InterPro" id="IPR039110">
    <property type="entry name" value="KNL2-like"/>
</dbReference>
<dbReference type="InterPro" id="IPR015216">
    <property type="entry name" value="SANTA"/>
</dbReference>
<dbReference type="PANTHER" id="PTHR16124">
    <property type="entry name" value="MIS18-BINDING PROTEIN 1"/>
    <property type="match status" value="1"/>
</dbReference>
<dbReference type="PANTHER" id="PTHR16124:SF3">
    <property type="entry name" value="MIS18-BINDING PROTEIN 1"/>
    <property type="match status" value="1"/>
</dbReference>
<dbReference type="Pfam" id="PF21506">
    <property type="entry name" value="Knl-2-like_dom"/>
    <property type="match status" value="1"/>
</dbReference>
<dbReference type="Pfam" id="PF09133">
    <property type="entry name" value="SANTA"/>
    <property type="match status" value="1"/>
</dbReference>
<evidence type="ECO:0000255" key="1"/>
<evidence type="ECO:0000255" key="2">
    <source>
        <dbReference type="PROSITE-ProRule" id="PRU00133"/>
    </source>
</evidence>
<evidence type="ECO:0000256" key="3">
    <source>
        <dbReference type="SAM" id="MobiDB-lite"/>
    </source>
</evidence>
<evidence type="ECO:0000269" key="4">
    <source>
    </source>
</evidence>
<evidence type="ECO:0000269" key="5">
    <source>
    </source>
</evidence>
<evidence type="ECO:0000305" key="6"/>
<evidence type="ECO:0000312" key="7">
    <source>
        <dbReference type="Proteomes" id="UP000001940"/>
    </source>
</evidence>
<evidence type="ECO:0000312" key="8">
    <source>
        <dbReference type="WormBase" id="K06A5.4"/>
    </source>
</evidence>
<evidence type="ECO:0007829" key="9">
    <source>
        <dbReference type="PDB" id="2M3A"/>
    </source>
</evidence>
<organism evidence="7">
    <name type="scientific">Caenorhabditis elegans</name>
    <dbReference type="NCBI Taxonomy" id="6239"/>
    <lineage>
        <taxon>Eukaryota</taxon>
        <taxon>Metazoa</taxon>
        <taxon>Ecdysozoa</taxon>
        <taxon>Nematoda</taxon>
        <taxon>Chromadorea</taxon>
        <taxon>Rhabditida</taxon>
        <taxon>Rhabditina</taxon>
        <taxon>Rhabditomorpha</taxon>
        <taxon>Rhabditoidea</taxon>
        <taxon>Rhabditidae</taxon>
        <taxon>Peloderinae</taxon>
        <taxon>Caenorhabditis</taxon>
    </lineage>
</organism>
<feature type="chain" id="PRO_0000439236" description="Kinetochore null protein 2">
    <location>
        <begin position="1"/>
        <end position="877"/>
    </location>
</feature>
<feature type="domain" description="SANTA">
    <location>
        <begin position="20"/>
        <end position="107"/>
    </location>
</feature>
<feature type="domain" description="Myb-like" evidence="2">
    <location>
        <begin position="617"/>
        <end position="678"/>
    </location>
</feature>
<feature type="region of interest" description="Disordered" evidence="3">
    <location>
        <begin position="122"/>
        <end position="315"/>
    </location>
</feature>
<feature type="region of interest" description="Disordered" evidence="3">
    <location>
        <begin position="338"/>
        <end position="535"/>
    </location>
</feature>
<feature type="region of interest" description="Disordered" evidence="3">
    <location>
        <begin position="549"/>
        <end position="604"/>
    </location>
</feature>
<feature type="region of interest" description="Disordered" evidence="3">
    <location>
        <begin position="757"/>
        <end position="785"/>
    </location>
</feature>
<feature type="region of interest" description="Disordered" evidence="3">
    <location>
        <begin position="808"/>
        <end position="877"/>
    </location>
</feature>
<feature type="coiled-coil region" evidence="1">
    <location>
        <begin position="153"/>
        <end position="211"/>
    </location>
</feature>
<feature type="coiled-coil region" evidence="1">
    <location>
        <begin position="491"/>
        <end position="549"/>
    </location>
</feature>
<feature type="compositionally biased region" description="Basic and acidic residues" evidence="3">
    <location>
        <begin position="156"/>
        <end position="199"/>
    </location>
</feature>
<feature type="compositionally biased region" description="Polar residues" evidence="3">
    <location>
        <begin position="251"/>
        <end position="279"/>
    </location>
</feature>
<feature type="compositionally biased region" description="Basic and acidic residues" evidence="3">
    <location>
        <begin position="359"/>
        <end position="385"/>
    </location>
</feature>
<feature type="compositionally biased region" description="Basic and acidic residues" evidence="3">
    <location>
        <begin position="394"/>
        <end position="444"/>
    </location>
</feature>
<feature type="compositionally biased region" description="Basic and acidic residues" evidence="3">
    <location>
        <begin position="453"/>
        <end position="480"/>
    </location>
</feature>
<feature type="compositionally biased region" description="Low complexity" evidence="3">
    <location>
        <begin position="511"/>
        <end position="520"/>
    </location>
</feature>
<feature type="compositionally biased region" description="Polar residues" evidence="3">
    <location>
        <begin position="573"/>
        <end position="583"/>
    </location>
</feature>
<feature type="compositionally biased region" description="Basic and acidic residues" evidence="3">
    <location>
        <begin position="592"/>
        <end position="601"/>
    </location>
</feature>
<feature type="compositionally biased region" description="Polar residues" evidence="3">
    <location>
        <begin position="775"/>
        <end position="785"/>
    </location>
</feature>
<feature type="compositionally biased region" description="Polar residues" evidence="3">
    <location>
        <begin position="819"/>
        <end position="836"/>
    </location>
</feature>
<feature type="compositionally biased region" description="Acidic residues" evidence="3">
    <location>
        <begin position="856"/>
        <end position="871"/>
    </location>
</feature>
<feature type="helix" evidence="9">
    <location>
        <begin position="625"/>
        <end position="638"/>
    </location>
</feature>
<feature type="helix" evidence="9">
    <location>
        <begin position="644"/>
        <end position="654"/>
    </location>
</feature>
<feature type="helix" evidence="9">
    <location>
        <begin position="655"/>
        <end position="657"/>
    </location>
</feature>
<feature type="helix" evidence="9">
    <location>
        <begin position="662"/>
        <end position="672"/>
    </location>
</feature>
<gene>
    <name evidence="8" type="primary">knl-2</name>
    <name evidence="8" type="ORF">K06A5.4</name>
</gene>
<keyword id="KW-0002">3D-structure</keyword>
<keyword id="KW-0131">Cell cycle</keyword>
<keyword id="KW-0132">Cell division</keyword>
<keyword id="KW-0137">Centromere</keyword>
<keyword id="KW-0158">Chromosome</keyword>
<keyword id="KW-0159">Chromosome partition</keyword>
<keyword id="KW-0175">Coiled coil</keyword>
<keyword id="KW-0995">Kinetochore</keyword>
<keyword id="KW-0469">Meiosis</keyword>
<keyword id="KW-0498">Mitosis</keyword>
<keyword id="KW-0539">Nucleus</keyword>
<keyword id="KW-1185">Reference proteome</keyword>
<reference evidence="7" key="1">
    <citation type="journal article" date="1998" name="Science">
        <title>Genome sequence of the nematode C. elegans: a platform for investigating biology.</title>
        <authorList>
            <consortium name="The C. elegans sequencing consortium"/>
        </authorList>
    </citation>
    <scope>NUCLEOTIDE SEQUENCE [LARGE SCALE GENOMIC DNA]</scope>
    <source>
        <strain evidence="7">Bristol N2</strain>
    </source>
</reference>
<reference evidence="6" key="2">
    <citation type="journal article" date="2007" name="J. Cell Biol.">
        <title>Functional genomics identifies a Myb domain-containing protein family required for assembly of CENP-A chromatin.</title>
        <authorList>
            <person name="Maddox P.S."/>
            <person name="Hyndman F."/>
            <person name="Monen J."/>
            <person name="Oegema K."/>
            <person name="Desai A."/>
        </authorList>
    </citation>
    <scope>FUNCTION</scope>
    <scope>INTERACTION WITH HCP-3</scope>
    <scope>SUBCELLULAR LOCATION</scope>
    <scope>DEVELOPMENTAL STAGE</scope>
    <scope>DISRUPTION PHENOTYPE</scope>
</reference>
<reference evidence="6" key="3">
    <citation type="journal article" date="2016" name="Cell Rep.">
        <title>RbAp46/48(LIN-53) is required for holocentromere assembly in Caenorhabditis elegans.</title>
        <authorList>
            <person name="Lee B.C."/>
            <person name="Lin Z."/>
            <person name="Yuen K.W."/>
        </authorList>
    </citation>
    <scope>FUNCTION</scope>
    <scope>DISRUPTION PHENOTYPE</scope>
</reference>
<reference evidence="6" key="4">
    <citation type="submission" date="2014-04" db="PDB data bank">
        <title>NMR solution structure of a MYB-like DNA binding domain of KNL-2 from C. elegans.</title>
        <authorList>
            <person name="Osborne M.J."/>
            <person name="Borden L.B."/>
        </authorList>
    </citation>
    <scope>STRUCTURE BY NMR OF 617-678</scope>
</reference>
<comment type="function">
    <text evidence="4 5">Required for the recruitment of hcp-3, hcp-4, knl-1, bub-1 and lin-53 to kinetochores, kinetochore assembly, chromosome condensation and chromosome segregation in meiosis and mitosis.</text>
</comment>
<comment type="subunit">
    <text evidence="4">Interacts with hcp-3.</text>
</comment>
<comment type="subcellular location">
    <subcellularLocation>
        <location evidence="4">Nucleus</location>
    </subcellularLocation>
    <subcellularLocation>
        <location evidence="4">Chromosome</location>
        <location evidence="4">Centromere</location>
    </subcellularLocation>
    <subcellularLocation>
        <location evidence="4">Chromosome</location>
        <location evidence="4">Centromere</location>
        <location evidence="4">Kinetochore</location>
    </subcellularLocation>
    <text evidence="4">Requires hcp-3 for chromatin localization.</text>
</comment>
<comment type="developmental stage">
    <text evidence="4">Expressed throughout embryogenesis (at protein level).</text>
</comment>
<comment type="disruption phenotype">
    <text evidence="4 5">RNAi-mediated knockdown results in absence of hcp-3, hcp-4, knl-1, bub-1 and lin-53 at kinetochores (PubMed:17339379, PubMed:26904949). Also causes defects in chromosome condensation and aberrant meiotic and mitotic chromosome segregation (PubMed:17339379).</text>
</comment>
<comment type="similarity">
    <text>Belongs to the KNL2 family.</text>
</comment>
<proteinExistence type="evidence at protein level"/>
<name>KNL2_CAEEL</name>
<protein>
    <recommendedName>
        <fullName evidence="6">Kinetochore null protein 2</fullName>
    </recommendedName>
</protein>
<sequence length="877" mass="101203">MGDTEIVPLRVQNVLDSEIIRLNLWSMKFNATSFKLEGFVRNEEGTMMQKVCSEFICRRFTSTLLFDVSGRFFDLVGQIDREYQQKMGMPSRIIDEFSNGIPENWADLIYSCMSANQRSALRPIQQAPKEPIRTRTEPIVTLADETELTGGCQKNSENEKERNRREREEQQTKERERRLEEEKQRRDAEAEAERRRKEEEELEEANYTLRAPKSQNGEPITPIRFTRGHDNGGAKKVFIFEQTPVRKQGPIASSTPQQKQRLADGANNQIPPTQKSQDSVQAVQPPPPRPAARNAQFASDADLFAVPKAPPSKSVRNLAASNVDIFADVDSVLDTFHFESTPGRVRKPGRRNVSSPSPEPRHRSSSRDGYEQSRYSQRYEHDNSRWSRHNATYRRHEDESRMSRKRSIVRDDFEYSRRHDDGARRRDYYDADIQGDSKRYRGRDASSSSGRSVRFEEEHRRHGDEYRDPRGPRDYNDYGRRRNHANSRSGEDEEKLNAIVRREKELRNRLQKSQKASSSSYRHRSNSSDAEESLNEWDIENQELLDNSMMFGDGIPKRSNARKDKFVKKQATRSKPANSTKSPAQARKKKRASLEDNRDLNDSIACNRPRRSCVTPVAKKITWRKQDLDRLKRVIALKKPSASDADWTEVLRLLAKEGVVEPEVVRQIAITRLKWVEPEQNEEVLKQVEEVEQKRRRGAVARVKENVKMHEELREGGNHRAEDLQSGVESMEDYQPEDVAADQSLLALRTPIVTKKRGGTRASIMPKPVEDSPMSRGNNSTFNSPRLEQTKAKDIETNFKYVQHLSMMQARPSSRLKKSSSMNNSTYRGNKNTSISLEKGTQKALKIINRGTTIHEDDENEDNDDDDDMREEDTSIY</sequence>
<accession>O44548</accession>